<name>O16M_CONEA</name>
<keyword id="KW-1015">Disulfide bond</keyword>
<keyword id="KW-0960">Knottin</keyword>
<keyword id="KW-0964">Secreted</keyword>
<keyword id="KW-0732">Signal</keyword>
<keyword id="KW-0800">Toxin</keyword>
<evidence type="ECO:0000250" key="1"/>
<evidence type="ECO:0000255" key="2"/>
<evidence type="ECO:0000305" key="3"/>
<feature type="signal peptide" evidence="2">
    <location>
        <begin position="1" status="less than"/>
        <end position="17"/>
    </location>
</feature>
<feature type="propeptide" id="PRO_0000414650" evidence="1">
    <location>
        <begin position="18"/>
        <end position="41"/>
    </location>
</feature>
<feature type="peptide" id="PRO_0000414651" description="Conotoxin Eb6.22">
    <location>
        <begin position="42"/>
        <end position="69"/>
    </location>
</feature>
<feature type="disulfide bond" evidence="1">
    <location>
        <begin position="43"/>
        <end position="57"/>
    </location>
</feature>
<feature type="disulfide bond" evidence="1">
    <location>
        <begin position="50"/>
        <end position="61"/>
    </location>
</feature>
<feature type="disulfide bond" evidence="1">
    <location>
        <begin position="56"/>
        <end position="68"/>
    </location>
</feature>
<feature type="non-terminal residue">
    <location>
        <position position="1"/>
    </location>
</feature>
<accession>C7T184</accession>
<organism>
    <name type="scientific">Conus ebraeus</name>
    <name type="common">Hebrew cone</name>
    <dbReference type="NCBI Taxonomy" id="89425"/>
    <lineage>
        <taxon>Eukaryota</taxon>
        <taxon>Metazoa</taxon>
        <taxon>Spiralia</taxon>
        <taxon>Lophotrochozoa</taxon>
        <taxon>Mollusca</taxon>
        <taxon>Gastropoda</taxon>
        <taxon>Caenogastropoda</taxon>
        <taxon>Neogastropoda</taxon>
        <taxon>Conoidea</taxon>
        <taxon>Conidae</taxon>
        <taxon>Conus</taxon>
        <taxon>Virroconus</taxon>
    </lineage>
</organism>
<comment type="subcellular location">
    <subcellularLocation>
        <location evidence="1">Secreted</location>
    </subcellularLocation>
</comment>
<comment type="tissue specificity">
    <text>Expressed by the venom duct.</text>
</comment>
<comment type="domain">
    <text evidence="1">The presence of a 'disulfide through disulfide knot' structurally defines this protein as a knottin.</text>
</comment>
<comment type="domain">
    <text>The cysteine framework is VI/VII (C-C-CC-C-C).</text>
</comment>
<comment type="miscellaneous">
    <text>This precursor corresponds to allele E1c. Has not been merged with other alleles since they may differ due to geographic variation (see strains in PubMed:19606224).</text>
</comment>
<comment type="similarity">
    <text evidence="3">Belongs to the conotoxin O1 superfamily.</text>
</comment>
<gene>
    <name type="primary">E1</name>
</gene>
<proteinExistence type="evidence at transcript level"/>
<protein>
    <recommendedName>
        <fullName>Conotoxin Eb6.22</fullName>
    </recommendedName>
</protein>
<reference key="1">
    <citation type="journal article" date="2009" name="PLoS ONE">
        <title>Geographic variation in venom allelic composition and diets of the widespread predatory marine gastropod Conus ebraeus.</title>
        <authorList>
            <person name="Duda T.F. Jr."/>
            <person name="Chang D."/>
            <person name="Lewis B.D."/>
            <person name="Lee T."/>
        </authorList>
    </citation>
    <scope>NUCLEOTIDE SEQUENCE [MRNA]</scope>
    <source>
        <strain>Guam</strain>
        <strain>Hawaii</strain>
        <strain>Okinawa</strain>
        <tissue>Venom duct</tissue>
    </source>
</reference>
<sequence length="69" mass="7710">VLIIAVLFLTACQLTTAETYSRGRQKHRARRSTDKNSKWTRECTRSGGACYSHNQCCDDFCSTATSTCV</sequence>
<dbReference type="EMBL" id="FJ804532">
    <property type="protein sequence ID" value="ACU56807.1"/>
    <property type="molecule type" value="mRNA"/>
</dbReference>
<dbReference type="ConoServer" id="3844">
    <property type="toxin name" value="Eb6.22 precursor"/>
</dbReference>
<dbReference type="GO" id="GO:0005576">
    <property type="term" value="C:extracellular region"/>
    <property type="evidence" value="ECO:0007669"/>
    <property type="project" value="UniProtKB-SubCell"/>
</dbReference>
<dbReference type="GO" id="GO:0008200">
    <property type="term" value="F:ion channel inhibitor activity"/>
    <property type="evidence" value="ECO:0007669"/>
    <property type="project" value="InterPro"/>
</dbReference>
<dbReference type="GO" id="GO:0090729">
    <property type="term" value="F:toxin activity"/>
    <property type="evidence" value="ECO:0007669"/>
    <property type="project" value="UniProtKB-KW"/>
</dbReference>
<dbReference type="InterPro" id="IPR004214">
    <property type="entry name" value="Conotoxin"/>
</dbReference>
<dbReference type="Pfam" id="PF02950">
    <property type="entry name" value="Conotoxin"/>
    <property type="match status" value="1"/>
</dbReference>